<accession>A9R2Q4</accession>
<feature type="chain" id="PRO_1000137056" description="Amino-acid acetyltransferase">
    <location>
        <begin position="1"/>
        <end position="441"/>
    </location>
</feature>
<feature type="domain" description="N-acetyltransferase" evidence="1">
    <location>
        <begin position="295"/>
        <end position="434"/>
    </location>
</feature>
<comment type="catalytic activity">
    <reaction evidence="1">
        <text>L-glutamate + acetyl-CoA = N-acetyl-L-glutamate + CoA + H(+)</text>
        <dbReference type="Rhea" id="RHEA:24292"/>
        <dbReference type="ChEBI" id="CHEBI:15378"/>
        <dbReference type="ChEBI" id="CHEBI:29985"/>
        <dbReference type="ChEBI" id="CHEBI:44337"/>
        <dbReference type="ChEBI" id="CHEBI:57287"/>
        <dbReference type="ChEBI" id="CHEBI:57288"/>
        <dbReference type="EC" id="2.3.1.1"/>
    </reaction>
</comment>
<comment type="pathway">
    <text evidence="1">Amino-acid biosynthesis; L-arginine biosynthesis; N(2)-acetyl-L-ornithine from L-glutamate: step 1/4.</text>
</comment>
<comment type="subunit">
    <text evidence="1">Homohexamer.</text>
</comment>
<comment type="subcellular location">
    <subcellularLocation>
        <location evidence="1">Cytoplasm</location>
    </subcellularLocation>
</comment>
<comment type="similarity">
    <text evidence="1">Belongs to the acetyltransferase family. ArgA subfamily.</text>
</comment>
<gene>
    <name evidence="1" type="primary">argA</name>
    <name type="ordered locus">YpAngola_A3229</name>
</gene>
<evidence type="ECO:0000255" key="1">
    <source>
        <dbReference type="HAMAP-Rule" id="MF_01105"/>
    </source>
</evidence>
<sequence length="441" mass="49355">MKERSTELVQGFRHSVPYINAHRGKTFVVMLGGEAIEHENFSSIVNDIGLLHSLGIRLVVVYGARPQIDSNLADHNYEPIYHKHTRVTDARTLEMVKQAAGLLQLDITARLSMSLNNTPLQGAHINVVSGNFIIAQPLGVDDGVDYCHSGRIRRIDEEAIHRQLDNGAIVLLGPVAVSVTGESFNLTSEEVATQLAIKLKAEKMIGFCSSQGVTDSEGNIISELFPNDAQKRIEDLEQDGDYNSGTVRFLRGAVKACRSGVRRSHLLSYQEDGALIQELFSRDGIGTQIVMESAEQVRRATINDIGGILELIRPLEQQGILVRRSREQLEMEIDKFTIIERDNLTIACAALYPFPDEHIGEMACVAVHPDYRSSSRGEMLLNRITNQARQMGLKKLFVLTTRSIHWFQERGFTPAEVDVLPIQKQELYNYQRRSKILLADL</sequence>
<dbReference type="EC" id="2.3.1.1" evidence="1"/>
<dbReference type="EMBL" id="CP000901">
    <property type="protein sequence ID" value="ABX87556.1"/>
    <property type="molecule type" value="Genomic_DNA"/>
</dbReference>
<dbReference type="RefSeq" id="WP_002211624.1">
    <property type="nucleotide sequence ID" value="NZ_CP009935.1"/>
</dbReference>
<dbReference type="SMR" id="A9R2Q4"/>
<dbReference type="GeneID" id="96662393"/>
<dbReference type="KEGG" id="ypg:YpAngola_A3229"/>
<dbReference type="PATRIC" id="fig|349746.12.peg.4292"/>
<dbReference type="UniPathway" id="UPA00068">
    <property type="reaction ID" value="UER00106"/>
</dbReference>
<dbReference type="GO" id="GO:0005737">
    <property type="term" value="C:cytoplasm"/>
    <property type="evidence" value="ECO:0007669"/>
    <property type="project" value="UniProtKB-SubCell"/>
</dbReference>
<dbReference type="GO" id="GO:0004042">
    <property type="term" value="F:L-glutamate N-acetyltransferase activity"/>
    <property type="evidence" value="ECO:0007669"/>
    <property type="project" value="UniProtKB-UniRule"/>
</dbReference>
<dbReference type="GO" id="GO:0006526">
    <property type="term" value="P:L-arginine biosynthetic process"/>
    <property type="evidence" value="ECO:0007669"/>
    <property type="project" value="UniProtKB-UniRule"/>
</dbReference>
<dbReference type="CDD" id="cd04237">
    <property type="entry name" value="AAK_NAGS-ABP"/>
    <property type="match status" value="1"/>
</dbReference>
<dbReference type="CDD" id="cd04301">
    <property type="entry name" value="NAT_SF"/>
    <property type="match status" value="1"/>
</dbReference>
<dbReference type="FunFam" id="3.40.1160.10:FF:000005">
    <property type="entry name" value="Amino-acid acetyltransferase"/>
    <property type="match status" value="1"/>
</dbReference>
<dbReference type="FunFam" id="3.40.630.30:FF:000009">
    <property type="entry name" value="Amino-acid acetyltransferase"/>
    <property type="match status" value="1"/>
</dbReference>
<dbReference type="Gene3D" id="3.40.630.30">
    <property type="match status" value="1"/>
</dbReference>
<dbReference type="Gene3D" id="3.40.1160.10">
    <property type="entry name" value="Acetylglutamate kinase-like"/>
    <property type="match status" value="1"/>
</dbReference>
<dbReference type="HAMAP" id="MF_01105">
    <property type="entry name" value="N_acetyl_glu_synth"/>
    <property type="match status" value="1"/>
</dbReference>
<dbReference type="InterPro" id="IPR036393">
    <property type="entry name" value="AceGlu_kinase-like_sf"/>
</dbReference>
<dbReference type="InterPro" id="IPR016181">
    <property type="entry name" value="Acyl_CoA_acyltransferase"/>
</dbReference>
<dbReference type="InterPro" id="IPR001048">
    <property type="entry name" value="Asp/Glu/Uridylate_kinase"/>
</dbReference>
<dbReference type="InterPro" id="IPR000182">
    <property type="entry name" value="GNAT_dom"/>
</dbReference>
<dbReference type="InterPro" id="IPR033719">
    <property type="entry name" value="NAGS_kin"/>
</dbReference>
<dbReference type="InterPro" id="IPR010167">
    <property type="entry name" value="NH2A_AcTrfase"/>
</dbReference>
<dbReference type="NCBIfam" id="TIGR01890">
    <property type="entry name" value="N-Ac-Glu-synth"/>
    <property type="match status" value="1"/>
</dbReference>
<dbReference type="NCBIfam" id="NF003641">
    <property type="entry name" value="PRK05279.1"/>
    <property type="match status" value="1"/>
</dbReference>
<dbReference type="PANTHER" id="PTHR30602">
    <property type="entry name" value="AMINO-ACID ACETYLTRANSFERASE"/>
    <property type="match status" value="1"/>
</dbReference>
<dbReference type="PANTHER" id="PTHR30602:SF12">
    <property type="entry name" value="AMINO-ACID ACETYLTRANSFERASE NAGS1, CHLOROPLASTIC-RELATED"/>
    <property type="match status" value="1"/>
</dbReference>
<dbReference type="Pfam" id="PF00696">
    <property type="entry name" value="AA_kinase"/>
    <property type="match status" value="1"/>
</dbReference>
<dbReference type="Pfam" id="PF00583">
    <property type="entry name" value="Acetyltransf_1"/>
    <property type="match status" value="1"/>
</dbReference>
<dbReference type="PIRSF" id="PIRSF000423">
    <property type="entry name" value="ArgA"/>
    <property type="match status" value="1"/>
</dbReference>
<dbReference type="SUPFAM" id="SSF55729">
    <property type="entry name" value="Acyl-CoA N-acyltransferases (Nat)"/>
    <property type="match status" value="1"/>
</dbReference>
<dbReference type="SUPFAM" id="SSF53633">
    <property type="entry name" value="Carbamate kinase-like"/>
    <property type="match status" value="1"/>
</dbReference>
<dbReference type="PROSITE" id="PS51186">
    <property type="entry name" value="GNAT"/>
    <property type="match status" value="1"/>
</dbReference>
<reference key="1">
    <citation type="journal article" date="2010" name="J. Bacteriol.">
        <title>Genome sequence of the deep-rooted Yersinia pestis strain Angola reveals new insights into the evolution and pangenome of the plague bacterium.</title>
        <authorList>
            <person name="Eppinger M."/>
            <person name="Worsham P.L."/>
            <person name="Nikolich M.P."/>
            <person name="Riley D.R."/>
            <person name="Sebastian Y."/>
            <person name="Mou S."/>
            <person name="Achtman M."/>
            <person name="Lindler L.E."/>
            <person name="Ravel J."/>
        </authorList>
    </citation>
    <scope>NUCLEOTIDE SEQUENCE [LARGE SCALE GENOMIC DNA]</scope>
    <source>
        <strain>Angola</strain>
    </source>
</reference>
<organism>
    <name type="scientific">Yersinia pestis bv. Antiqua (strain Angola)</name>
    <dbReference type="NCBI Taxonomy" id="349746"/>
    <lineage>
        <taxon>Bacteria</taxon>
        <taxon>Pseudomonadati</taxon>
        <taxon>Pseudomonadota</taxon>
        <taxon>Gammaproteobacteria</taxon>
        <taxon>Enterobacterales</taxon>
        <taxon>Yersiniaceae</taxon>
        <taxon>Yersinia</taxon>
    </lineage>
</organism>
<protein>
    <recommendedName>
        <fullName evidence="1">Amino-acid acetyltransferase</fullName>
        <ecNumber evidence="1">2.3.1.1</ecNumber>
    </recommendedName>
    <alternativeName>
        <fullName evidence="1">N-acetylglutamate synthase</fullName>
        <shortName evidence="1">AGS</shortName>
        <shortName evidence="1">NAGS</shortName>
    </alternativeName>
</protein>
<keyword id="KW-0012">Acyltransferase</keyword>
<keyword id="KW-0028">Amino-acid biosynthesis</keyword>
<keyword id="KW-0055">Arginine biosynthesis</keyword>
<keyword id="KW-0963">Cytoplasm</keyword>
<keyword id="KW-0808">Transferase</keyword>
<name>ARGA_YERPG</name>
<proteinExistence type="inferred from homology"/>